<gene>
    <name type="ORF">pi066</name>
    <name type="ORF">SPBC27B12.12c</name>
</gene>
<sequence length="803" mass="89397">MSFQQPSNGAQGGNNNALEKTSSNEATSSSSTQVSSLSASGISVSTPRVSPFEPERNMQVQSSQHLEANVQSPVSSQTTYATPSAYAVPQESEIELHESEMVPQKPKKKKRSRRNRKASRKKIPATQSSSADMDTLHVCPTCGSCSDSKKPQSNKKHRGRRVKHSPKSTLEVPDGIPDIKALSASMGSSSQHASRYNEGRGSFDTLGTHYHLSKSRKSSSSDSLYSVSSMSIKNDSNSDSLSSSSSSDVSGSDENLPIDKTLYLSVEDPSFMVHPRRPSATKSCSAAVDCPHTTIPKPPYQSDTDLTELPTKSTAQFSDETFTVQPRLKSTHSSIADNEDREVDSQVDENTRVVEEDVCFPMQEESHVNKGIDFDELDNFAEEELQKQRQNTDHFRSRQYSTCKPFEPHWNDLSPHDPNDPSSSLHSNNAEKAAEVPLRSSYYSGGRRSVTSMSDSPYRFSFFSSNQNETIHASVLSDLLDDGATSFRSLFCPEKGVWWLDCLDPTDIEMRVLSKAFSIHPLTTEDIRVQEAREKVELFGSYYFVCFRSFEQDPELANYLEPLNMYIVVFREGLLTFHFSSATHPASVRRRARQLRDYVHVSSDWLCYALIDDITDAFVPLIRGIETETEAIEDSVLVGRSEDSSDMLRRIGECRKKTMGMFRLLYGKADVIKMLAKRCNEKWTIAPTGEIGLYLGDIQDHLVTMTSNLSQFEKILSRTHSNYLAQLTSNSIEENSRTNGALGKITLIGTLLVPMNLVTGLFGMNVPVPGRDTNNLAWFFGILGVLLGSIAIGWIITMRYNAF</sequence>
<feature type="chain" id="PRO_0000316218" description="Putative metal ion transporter C27B12.12c">
    <location>
        <begin position="1"/>
        <end position="803"/>
    </location>
</feature>
<feature type="transmembrane region" description="Helical" evidence="1">
    <location>
        <begin position="745"/>
        <end position="765"/>
    </location>
</feature>
<feature type="transmembrane region" description="Helical" evidence="1">
    <location>
        <begin position="776"/>
        <end position="796"/>
    </location>
</feature>
<feature type="region of interest" description="Disordered" evidence="2">
    <location>
        <begin position="1"/>
        <end position="255"/>
    </location>
</feature>
<feature type="region of interest" description="Disordered" evidence="2">
    <location>
        <begin position="326"/>
        <end position="349"/>
    </location>
</feature>
<feature type="region of interest" description="Disordered" evidence="2">
    <location>
        <begin position="406"/>
        <end position="431"/>
    </location>
</feature>
<feature type="compositionally biased region" description="Polar residues" evidence="2">
    <location>
        <begin position="1"/>
        <end position="20"/>
    </location>
</feature>
<feature type="compositionally biased region" description="Low complexity" evidence="2">
    <location>
        <begin position="21"/>
        <end position="45"/>
    </location>
</feature>
<feature type="compositionally biased region" description="Polar residues" evidence="2">
    <location>
        <begin position="58"/>
        <end position="82"/>
    </location>
</feature>
<feature type="compositionally biased region" description="Basic residues" evidence="2">
    <location>
        <begin position="105"/>
        <end position="123"/>
    </location>
</feature>
<feature type="compositionally biased region" description="Basic residues" evidence="2">
    <location>
        <begin position="152"/>
        <end position="166"/>
    </location>
</feature>
<feature type="compositionally biased region" description="Low complexity" evidence="2">
    <location>
        <begin position="181"/>
        <end position="194"/>
    </location>
</feature>
<feature type="compositionally biased region" description="Low complexity" evidence="2">
    <location>
        <begin position="218"/>
        <end position="253"/>
    </location>
</feature>
<feature type="compositionally biased region" description="Acidic residues" evidence="2">
    <location>
        <begin position="337"/>
        <end position="347"/>
    </location>
</feature>
<feature type="compositionally biased region" description="Basic and acidic residues" evidence="2">
    <location>
        <begin position="406"/>
        <end position="419"/>
    </location>
</feature>
<feature type="compositionally biased region" description="Polar residues" evidence="2">
    <location>
        <begin position="420"/>
        <end position="430"/>
    </location>
</feature>
<feature type="modified residue" description="Phosphoserine" evidence="4">
    <location>
        <position position="318"/>
    </location>
</feature>
<feature type="modified residue" description="Phosphoserine" evidence="4">
    <location>
        <position position="449"/>
    </location>
</feature>
<feature type="modified residue" description="Phosphoserine" evidence="4">
    <location>
        <position position="452"/>
    </location>
</feature>
<protein>
    <recommendedName>
        <fullName>Putative metal ion transporter C27B12.12c</fullName>
    </recommendedName>
</protein>
<proteinExistence type="evidence at protein level"/>
<accession>O13657</accession>
<accession>Q7LWD8</accession>
<comment type="subcellular location">
    <subcellularLocation>
        <location evidence="3">Cytoplasm</location>
    </subcellularLocation>
    <subcellularLocation>
        <location evidence="5">Membrane</location>
        <topology evidence="5">Multi-pass membrane protein</topology>
    </subcellularLocation>
</comment>
<comment type="similarity">
    <text evidence="5">Belongs to the CorA metal ion transporter (MIT) (TC 1.A.35) family.</text>
</comment>
<evidence type="ECO:0000255" key="1"/>
<evidence type="ECO:0000256" key="2">
    <source>
        <dbReference type="SAM" id="MobiDB-lite"/>
    </source>
</evidence>
<evidence type="ECO:0000269" key="3">
    <source>
    </source>
</evidence>
<evidence type="ECO:0000269" key="4">
    <source>
    </source>
</evidence>
<evidence type="ECO:0000305" key="5"/>
<name>YBCC_SCHPO</name>
<keyword id="KW-0963">Cytoplasm</keyword>
<keyword id="KW-0472">Membrane</keyword>
<keyword id="KW-0597">Phosphoprotein</keyword>
<keyword id="KW-1185">Reference proteome</keyword>
<keyword id="KW-0812">Transmembrane</keyword>
<keyword id="KW-1133">Transmembrane helix</keyword>
<keyword id="KW-0813">Transport</keyword>
<reference key="1">
    <citation type="journal article" date="2000" name="Yeast">
        <title>A 38 kb segment containing the cdc2 gene from the left arm of fission yeast chromosome II: sequence analysis and characterization of the genomic DNA and cDNAs encoded on the segment.</title>
        <authorList>
            <person name="Machida M."/>
            <person name="Yamazaki S."/>
            <person name="Kunihiro S."/>
            <person name="Tanaka T."/>
            <person name="Kushida N."/>
            <person name="Jinno K."/>
            <person name="Haikawa Y."/>
            <person name="Yamazaki J."/>
            <person name="Yamamoto S."/>
            <person name="Sekine M."/>
            <person name="Oguchi A."/>
            <person name="Nagai Y."/>
            <person name="Sakai M."/>
            <person name="Aoki K."/>
            <person name="Ogura K."/>
            <person name="Kudoh Y."/>
            <person name="Kikuchi H."/>
            <person name="Zhang M.Q."/>
            <person name="Yanagida M."/>
        </authorList>
    </citation>
    <scope>NUCLEOTIDE SEQUENCE [LARGE SCALE GENOMIC DNA]</scope>
    <source>
        <strain>972 / ATCC 24843</strain>
    </source>
</reference>
<reference key="2">
    <citation type="journal article" date="2002" name="Nature">
        <title>The genome sequence of Schizosaccharomyces pombe.</title>
        <authorList>
            <person name="Wood V."/>
            <person name="Gwilliam R."/>
            <person name="Rajandream M.A."/>
            <person name="Lyne M.H."/>
            <person name="Lyne R."/>
            <person name="Stewart A."/>
            <person name="Sgouros J.G."/>
            <person name="Peat N."/>
            <person name="Hayles J."/>
            <person name="Baker S.G."/>
            <person name="Basham D."/>
            <person name="Bowman S."/>
            <person name="Brooks K."/>
            <person name="Brown D."/>
            <person name="Brown S."/>
            <person name="Chillingworth T."/>
            <person name="Churcher C.M."/>
            <person name="Collins M."/>
            <person name="Connor R."/>
            <person name="Cronin A."/>
            <person name="Davis P."/>
            <person name="Feltwell T."/>
            <person name="Fraser A."/>
            <person name="Gentles S."/>
            <person name="Goble A."/>
            <person name="Hamlin N."/>
            <person name="Harris D.E."/>
            <person name="Hidalgo J."/>
            <person name="Hodgson G."/>
            <person name="Holroyd S."/>
            <person name="Hornsby T."/>
            <person name="Howarth S."/>
            <person name="Huckle E.J."/>
            <person name="Hunt S."/>
            <person name="Jagels K."/>
            <person name="James K.D."/>
            <person name="Jones L."/>
            <person name="Jones M."/>
            <person name="Leather S."/>
            <person name="McDonald S."/>
            <person name="McLean J."/>
            <person name="Mooney P."/>
            <person name="Moule S."/>
            <person name="Mungall K.L."/>
            <person name="Murphy L.D."/>
            <person name="Niblett D."/>
            <person name="Odell C."/>
            <person name="Oliver K."/>
            <person name="O'Neil S."/>
            <person name="Pearson D."/>
            <person name="Quail M.A."/>
            <person name="Rabbinowitsch E."/>
            <person name="Rutherford K.M."/>
            <person name="Rutter S."/>
            <person name="Saunders D."/>
            <person name="Seeger K."/>
            <person name="Sharp S."/>
            <person name="Skelton J."/>
            <person name="Simmonds M.N."/>
            <person name="Squares R."/>
            <person name="Squares S."/>
            <person name="Stevens K."/>
            <person name="Taylor K."/>
            <person name="Taylor R.G."/>
            <person name="Tivey A."/>
            <person name="Walsh S.V."/>
            <person name="Warren T."/>
            <person name="Whitehead S."/>
            <person name="Woodward J.R."/>
            <person name="Volckaert G."/>
            <person name="Aert R."/>
            <person name="Robben J."/>
            <person name="Grymonprez B."/>
            <person name="Weltjens I."/>
            <person name="Vanstreels E."/>
            <person name="Rieger M."/>
            <person name="Schaefer M."/>
            <person name="Mueller-Auer S."/>
            <person name="Gabel C."/>
            <person name="Fuchs M."/>
            <person name="Duesterhoeft A."/>
            <person name="Fritzc C."/>
            <person name="Holzer E."/>
            <person name="Moestl D."/>
            <person name="Hilbert H."/>
            <person name="Borzym K."/>
            <person name="Langer I."/>
            <person name="Beck A."/>
            <person name="Lehrach H."/>
            <person name="Reinhardt R."/>
            <person name="Pohl T.M."/>
            <person name="Eger P."/>
            <person name="Zimmermann W."/>
            <person name="Wedler H."/>
            <person name="Wambutt R."/>
            <person name="Purnelle B."/>
            <person name="Goffeau A."/>
            <person name="Cadieu E."/>
            <person name="Dreano S."/>
            <person name="Gloux S."/>
            <person name="Lelaure V."/>
            <person name="Mottier S."/>
            <person name="Galibert F."/>
            <person name="Aves S.J."/>
            <person name="Xiang Z."/>
            <person name="Hunt C."/>
            <person name="Moore K."/>
            <person name="Hurst S.M."/>
            <person name="Lucas M."/>
            <person name="Rochet M."/>
            <person name="Gaillardin C."/>
            <person name="Tallada V.A."/>
            <person name="Garzon A."/>
            <person name="Thode G."/>
            <person name="Daga R.R."/>
            <person name="Cruzado L."/>
            <person name="Jimenez J."/>
            <person name="Sanchez M."/>
            <person name="del Rey F."/>
            <person name="Benito J."/>
            <person name="Dominguez A."/>
            <person name="Revuelta J.L."/>
            <person name="Moreno S."/>
            <person name="Armstrong J."/>
            <person name="Forsburg S.L."/>
            <person name="Cerutti L."/>
            <person name="Lowe T."/>
            <person name="McCombie W.R."/>
            <person name="Paulsen I."/>
            <person name="Potashkin J."/>
            <person name="Shpakovski G.V."/>
            <person name="Ussery D."/>
            <person name="Barrell B.G."/>
            <person name="Nurse P."/>
        </authorList>
    </citation>
    <scope>NUCLEOTIDE SEQUENCE [LARGE SCALE GENOMIC DNA]</scope>
    <source>
        <strain>972 / ATCC 24843</strain>
    </source>
</reference>
<reference key="3">
    <citation type="journal article" date="2006" name="Nat. Biotechnol.">
        <title>ORFeome cloning and global analysis of protein localization in the fission yeast Schizosaccharomyces pombe.</title>
        <authorList>
            <person name="Matsuyama A."/>
            <person name="Arai R."/>
            <person name="Yashiroda Y."/>
            <person name="Shirai A."/>
            <person name="Kamata A."/>
            <person name="Sekido S."/>
            <person name="Kobayashi Y."/>
            <person name="Hashimoto A."/>
            <person name="Hamamoto M."/>
            <person name="Hiraoka Y."/>
            <person name="Horinouchi S."/>
            <person name="Yoshida M."/>
        </authorList>
    </citation>
    <scope>SUBCELLULAR LOCATION [LARGE SCALE ANALYSIS]</scope>
</reference>
<reference key="4">
    <citation type="journal article" date="2008" name="J. Proteome Res.">
        <title>Phosphoproteome analysis of fission yeast.</title>
        <authorList>
            <person name="Wilson-Grady J.T."/>
            <person name="Villen J."/>
            <person name="Gygi S.P."/>
        </authorList>
    </citation>
    <scope>PHOSPHORYLATION [LARGE SCALE ANALYSIS] AT SER-318; SER-449 AND SER-452</scope>
    <scope>IDENTIFICATION BY MASS SPECTROMETRY</scope>
</reference>
<organism>
    <name type="scientific">Schizosaccharomyces pombe (strain 972 / ATCC 24843)</name>
    <name type="common">Fission yeast</name>
    <dbReference type="NCBI Taxonomy" id="284812"/>
    <lineage>
        <taxon>Eukaryota</taxon>
        <taxon>Fungi</taxon>
        <taxon>Dikarya</taxon>
        <taxon>Ascomycota</taxon>
        <taxon>Taphrinomycotina</taxon>
        <taxon>Schizosaccharomycetes</taxon>
        <taxon>Schizosaccharomycetales</taxon>
        <taxon>Schizosaccharomycetaceae</taxon>
        <taxon>Schizosaccharomyces</taxon>
    </lineage>
</organism>
<dbReference type="EMBL" id="AB004538">
    <property type="protein sequence ID" value="BAA21447.1"/>
    <property type="molecule type" value="Genomic_DNA"/>
</dbReference>
<dbReference type="EMBL" id="AB004539">
    <property type="protein sequence ID" value="BAA21448.1"/>
    <property type="molecule type" value="Genomic_DNA"/>
</dbReference>
<dbReference type="EMBL" id="CU329671">
    <property type="protein sequence ID" value="CAA16907.1"/>
    <property type="molecule type" value="Genomic_DNA"/>
</dbReference>
<dbReference type="PIR" id="T40036">
    <property type="entry name" value="T40036"/>
</dbReference>
<dbReference type="RefSeq" id="NP_595545.1">
    <property type="nucleotide sequence ID" value="NM_001021456.2"/>
</dbReference>
<dbReference type="SMR" id="O13657"/>
<dbReference type="BioGRID" id="276829">
    <property type="interactions" value="5"/>
</dbReference>
<dbReference type="FunCoup" id="O13657">
    <property type="interactions" value="81"/>
</dbReference>
<dbReference type="STRING" id="284812.O13657"/>
<dbReference type="TCDB" id="1.A.35.2.3">
    <property type="family name" value="the cora metal ion transporter (mit) family"/>
</dbReference>
<dbReference type="iPTMnet" id="O13657"/>
<dbReference type="PaxDb" id="4896-SPBC27B12.12c.1"/>
<dbReference type="EnsemblFungi" id="SPBC27B12.12c.1">
    <property type="protein sequence ID" value="SPBC27B12.12c.1:pep"/>
    <property type="gene ID" value="SPBC27B12.12c"/>
</dbReference>
<dbReference type="KEGG" id="spo:2540298"/>
<dbReference type="PomBase" id="SPBC27B12.12c"/>
<dbReference type="VEuPathDB" id="FungiDB:SPBC27B12.12c"/>
<dbReference type="eggNOG" id="ENOG502QPTQ">
    <property type="taxonomic scope" value="Eukaryota"/>
</dbReference>
<dbReference type="HOGENOM" id="CLU_007127_10_1_1"/>
<dbReference type="InParanoid" id="O13657"/>
<dbReference type="OMA" id="FPMQEES"/>
<dbReference type="PhylomeDB" id="O13657"/>
<dbReference type="PRO" id="PR:O13657"/>
<dbReference type="Proteomes" id="UP000002485">
    <property type="component" value="Chromosome II"/>
</dbReference>
<dbReference type="GO" id="GO:0005737">
    <property type="term" value="C:cytoplasm"/>
    <property type="evidence" value="ECO:0007669"/>
    <property type="project" value="UniProtKB-SubCell"/>
</dbReference>
<dbReference type="GO" id="GO:0005886">
    <property type="term" value="C:plasma membrane"/>
    <property type="evidence" value="ECO:0000318"/>
    <property type="project" value="GO_Central"/>
</dbReference>
<dbReference type="GO" id="GO:0015095">
    <property type="term" value="F:magnesium ion transmembrane transporter activity"/>
    <property type="evidence" value="ECO:0000318"/>
    <property type="project" value="GO_Central"/>
</dbReference>
<dbReference type="GO" id="GO:0010961">
    <property type="term" value="P:intracellular magnesium ion homeostasis"/>
    <property type="evidence" value="ECO:0000318"/>
    <property type="project" value="GO_Central"/>
</dbReference>
<dbReference type="CDD" id="cd12829">
    <property type="entry name" value="Alr1p-like"/>
    <property type="match status" value="1"/>
</dbReference>
<dbReference type="FunFam" id="1.20.58.340:FF:000006">
    <property type="entry name" value="CorA family metal ion transporter"/>
    <property type="match status" value="1"/>
</dbReference>
<dbReference type="Gene3D" id="3.30.460.20">
    <property type="entry name" value="CorA soluble domain-like"/>
    <property type="match status" value="1"/>
</dbReference>
<dbReference type="Gene3D" id="1.20.58.340">
    <property type="entry name" value="Magnesium transport protein CorA, transmembrane region"/>
    <property type="match status" value="2"/>
</dbReference>
<dbReference type="InterPro" id="IPR044089">
    <property type="entry name" value="Alr1-like"/>
</dbReference>
<dbReference type="InterPro" id="IPR045861">
    <property type="entry name" value="CorA_cytoplasmic_dom"/>
</dbReference>
<dbReference type="InterPro" id="IPR045863">
    <property type="entry name" value="CorA_TM1_TM2"/>
</dbReference>
<dbReference type="InterPro" id="IPR002523">
    <property type="entry name" value="MgTranspt_CorA/ZnTranspt_ZntB"/>
</dbReference>
<dbReference type="PANTHER" id="PTHR21535">
    <property type="entry name" value="MAGNESIUM AND COBALT TRANSPORT PROTEIN/MITOCHONDRIAL IMPORT INNER MEMBRANE TRANSLOCASE SUBUNIT TIM8"/>
    <property type="match status" value="1"/>
</dbReference>
<dbReference type="PANTHER" id="PTHR21535:SF55">
    <property type="entry name" value="MAGNESIUM TRANSPORTER ALR1-RELATED"/>
    <property type="match status" value="1"/>
</dbReference>
<dbReference type="Pfam" id="PF01544">
    <property type="entry name" value="CorA"/>
    <property type="match status" value="1"/>
</dbReference>
<dbReference type="SUPFAM" id="SSF143865">
    <property type="entry name" value="CorA soluble domain-like"/>
    <property type="match status" value="1"/>
</dbReference>
<dbReference type="SUPFAM" id="SSF144083">
    <property type="entry name" value="Magnesium transport protein CorA, transmembrane region"/>
    <property type="match status" value="1"/>
</dbReference>